<sequence length="681" mass="72992">MRQPLLKLAAVTRRFPAGDKDVVVLNNVNLSIGAGEIVAIVGASGSGKSTLMNILGCLDHPSEGTYTVGGRDTHMLDSDELAQLRREHFGFVFQRYHLLPHVDAVANLEMPAIYAGTPRADRHARARELLARLGLADRAHHRPGQLSGGQQQRVSIARALMNGGQVILADEPTGALDTKSGQDVIRILHELNALGHTIVIVTHDKAVARHARRIIEISDGEIVADRPNRHYAEAFAEVGVGAAATTETAADTRSAPASGDAPPPANNDTAADPAPRARRFAAGTGRFAEACRMAWIALVSHRLRTLLTMLGIIIGITSVVSIVAVGEGAKRYMLEEIGSIGTNTISLYPGSDWGDSRADTIQTLVPADVAALAEQPYVDSATPETSRTLLLRYRNVDVHALVSGVGDSYFQTRGMRFALGVPFDDDAVRRQAQVAVIDQNTRRKLFGATRNPVGEAILVDNVPCVVIGVTADKKSAFGSVKSLNVWVPYTTASGRLFGQRYLDSITVRVRDGQPSAAAEKSLEKLMIQRHGRKDFFTYNMDSVVKTVEKTGQSLTLLLSLIAVISLVVGGIGVMNIMLVSVTERTREIGIRMAVGARQSDILQQFLVEAVLVCLLGGTIGIALSFGLGALFSVFVAQWKMVFSAGAIVTAFVCSTLTGVIFGFMPARNASRLDPIDALARD</sequence>
<keyword id="KW-0046">Antibiotic resistance</keyword>
<keyword id="KW-0067">ATP-binding</keyword>
<keyword id="KW-0997">Cell inner membrane</keyword>
<keyword id="KW-1003">Cell membrane</keyword>
<keyword id="KW-0472">Membrane</keyword>
<keyword id="KW-0547">Nucleotide-binding</keyword>
<keyword id="KW-1278">Translocase</keyword>
<keyword id="KW-0812">Transmembrane</keyword>
<keyword id="KW-1133">Transmembrane helix</keyword>
<keyword id="KW-0813">Transport</keyword>
<comment type="function">
    <text evidence="1">Non-canonical ABC transporter that contains transmembrane domains (TMD), which form a pore in the inner membrane, and an ATP-binding domain (NBD), which is responsible for energy generation. Confers resistance against macrolides.</text>
</comment>
<comment type="subunit">
    <text evidence="1">Homodimer.</text>
</comment>
<comment type="subcellular location">
    <subcellularLocation>
        <location evidence="1">Cell inner membrane</location>
        <topology evidence="1">Multi-pass membrane protein</topology>
    </subcellularLocation>
</comment>
<comment type="similarity">
    <text evidence="1">Belongs to the ABC transporter superfamily. Macrolide exporter (TC 3.A.1.122) family.</text>
</comment>
<accession>A0B212</accession>
<proteinExistence type="inferred from homology"/>
<reference key="1">
    <citation type="submission" date="2006-08" db="EMBL/GenBank/DDBJ databases">
        <title>Complete sequence of chromosome 2 of Burkholderia cenocepacia HI2424.</title>
        <authorList>
            <person name="Copeland A."/>
            <person name="Lucas S."/>
            <person name="Lapidus A."/>
            <person name="Barry K."/>
            <person name="Detter J.C."/>
            <person name="Glavina del Rio T."/>
            <person name="Hammon N."/>
            <person name="Israni S."/>
            <person name="Pitluck S."/>
            <person name="Chain P."/>
            <person name="Malfatti S."/>
            <person name="Shin M."/>
            <person name="Vergez L."/>
            <person name="Schmutz J."/>
            <person name="Larimer F."/>
            <person name="Land M."/>
            <person name="Hauser L."/>
            <person name="Kyrpides N."/>
            <person name="Kim E."/>
            <person name="LiPuma J.J."/>
            <person name="Gonzalez C.F."/>
            <person name="Konstantinidis K."/>
            <person name="Tiedje J.M."/>
            <person name="Richardson P."/>
        </authorList>
    </citation>
    <scope>NUCLEOTIDE SEQUENCE [LARGE SCALE GENOMIC DNA]</scope>
    <source>
        <strain>HI2424</strain>
    </source>
</reference>
<protein>
    <recommendedName>
        <fullName evidence="1">Macrolide export ATP-binding/permease protein MacB</fullName>
        <ecNumber evidence="1">7.6.2.-</ecNumber>
    </recommendedName>
</protein>
<feature type="chain" id="PRO_0000280163" description="Macrolide export ATP-binding/permease protein MacB">
    <location>
        <begin position="1"/>
        <end position="681"/>
    </location>
</feature>
<feature type="transmembrane region" description="Helical" evidence="1">
    <location>
        <begin position="306"/>
        <end position="326"/>
    </location>
</feature>
<feature type="transmembrane region" description="Helical" evidence="1">
    <location>
        <begin position="554"/>
        <end position="574"/>
    </location>
</feature>
<feature type="transmembrane region" description="Helical" evidence="1">
    <location>
        <begin position="611"/>
        <end position="631"/>
    </location>
</feature>
<feature type="transmembrane region" description="Helical" evidence="1">
    <location>
        <begin position="644"/>
        <end position="664"/>
    </location>
</feature>
<feature type="domain" description="ABC transporter" evidence="1">
    <location>
        <begin position="6"/>
        <end position="244"/>
    </location>
</feature>
<feature type="region of interest" description="Disordered" evidence="2">
    <location>
        <begin position="246"/>
        <end position="274"/>
    </location>
</feature>
<feature type="binding site" evidence="1">
    <location>
        <begin position="42"/>
        <end position="49"/>
    </location>
    <ligand>
        <name>ATP</name>
        <dbReference type="ChEBI" id="CHEBI:30616"/>
    </ligand>
</feature>
<dbReference type="EC" id="7.6.2.-" evidence="1"/>
<dbReference type="EMBL" id="CP000459">
    <property type="protein sequence ID" value="ABK11688.1"/>
    <property type="molecule type" value="Genomic_DNA"/>
</dbReference>
<dbReference type="RefSeq" id="WP_011694806.1">
    <property type="nucleotide sequence ID" value="NC_008543.1"/>
</dbReference>
<dbReference type="SMR" id="A0B212"/>
<dbReference type="KEGG" id="bch:Bcen2424_4954"/>
<dbReference type="HOGENOM" id="CLU_000604_78_1_4"/>
<dbReference type="GO" id="GO:0005886">
    <property type="term" value="C:plasma membrane"/>
    <property type="evidence" value="ECO:0007669"/>
    <property type="project" value="UniProtKB-SubCell"/>
</dbReference>
<dbReference type="GO" id="GO:0005524">
    <property type="term" value="F:ATP binding"/>
    <property type="evidence" value="ECO:0007669"/>
    <property type="project" value="UniProtKB-KW"/>
</dbReference>
<dbReference type="GO" id="GO:0016887">
    <property type="term" value="F:ATP hydrolysis activity"/>
    <property type="evidence" value="ECO:0007669"/>
    <property type="project" value="InterPro"/>
</dbReference>
<dbReference type="GO" id="GO:0022857">
    <property type="term" value="F:transmembrane transporter activity"/>
    <property type="evidence" value="ECO:0007669"/>
    <property type="project" value="TreeGrafter"/>
</dbReference>
<dbReference type="GO" id="GO:0046677">
    <property type="term" value="P:response to antibiotic"/>
    <property type="evidence" value="ECO:0007669"/>
    <property type="project" value="UniProtKB-KW"/>
</dbReference>
<dbReference type="CDD" id="cd03255">
    <property type="entry name" value="ABC_MJ0796_LolCDE_FtsE"/>
    <property type="match status" value="1"/>
</dbReference>
<dbReference type="FunFam" id="3.40.50.300:FF:000032">
    <property type="entry name" value="Export ABC transporter ATP-binding protein"/>
    <property type="match status" value="1"/>
</dbReference>
<dbReference type="Gene3D" id="3.40.50.300">
    <property type="entry name" value="P-loop containing nucleotide triphosphate hydrolases"/>
    <property type="match status" value="1"/>
</dbReference>
<dbReference type="InterPro" id="IPR003593">
    <property type="entry name" value="AAA+_ATPase"/>
</dbReference>
<dbReference type="InterPro" id="IPR003838">
    <property type="entry name" value="ABC3_permease_C"/>
</dbReference>
<dbReference type="InterPro" id="IPR003439">
    <property type="entry name" value="ABC_transporter-like_ATP-bd"/>
</dbReference>
<dbReference type="InterPro" id="IPR017871">
    <property type="entry name" value="ABC_transporter-like_CS"/>
</dbReference>
<dbReference type="InterPro" id="IPR017911">
    <property type="entry name" value="MacB-like_ATP-bd"/>
</dbReference>
<dbReference type="InterPro" id="IPR025857">
    <property type="entry name" value="MacB_PCD"/>
</dbReference>
<dbReference type="InterPro" id="IPR050250">
    <property type="entry name" value="Macrolide_Exporter_MacB"/>
</dbReference>
<dbReference type="InterPro" id="IPR027417">
    <property type="entry name" value="P-loop_NTPase"/>
</dbReference>
<dbReference type="PANTHER" id="PTHR30572:SF7">
    <property type="entry name" value="MACROLIDE EXPORT ATP-BINDING_PERMEASE PROTEIN MACB"/>
    <property type="match status" value="1"/>
</dbReference>
<dbReference type="PANTHER" id="PTHR30572">
    <property type="entry name" value="MEMBRANE COMPONENT OF TRANSPORTER-RELATED"/>
    <property type="match status" value="1"/>
</dbReference>
<dbReference type="Pfam" id="PF00005">
    <property type="entry name" value="ABC_tran"/>
    <property type="match status" value="1"/>
</dbReference>
<dbReference type="Pfam" id="PF02687">
    <property type="entry name" value="FtsX"/>
    <property type="match status" value="1"/>
</dbReference>
<dbReference type="Pfam" id="PF12704">
    <property type="entry name" value="MacB_PCD"/>
    <property type="match status" value="1"/>
</dbReference>
<dbReference type="SMART" id="SM00382">
    <property type="entry name" value="AAA"/>
    <property type="match status" value="1"/>
</dbReference>
<dbReference type="SUPFAM" id="SSF52540">
    <property type="entry name" value="P-loop containing nucleoside triphosphate hydrolases"/>
    <property type="match status" value="1"/>
</dbReference>
<dbReference type="PROSITE" id="PS00211">
    <property type="entry name" value="ABC_TRANSPORTER_1"/>
    <property type="match status" value="1"/>
</dbReference>
<dbReference type="PROSITE" id="PS50893">
    <property type="entry name" value="ABC_TRANSPORTER_2"/>
    <property type="match status" value="1"/>
</dbReference>
<dbReference type="PROSITE" id="PS51267">
    <property type="entry name" value="MACB"/>
    <property type="match status" value="1"/>
</dbReference>
<organism>
    <name type="scientific">Burkholderia cenocepacia (strain HI2424)</name>
    <dbReference type="NCBI Taxonomy" id="331272"/>
    <lineage>
        <taxon>Bacteria</taxon>
        <taxon>Pseudomonadati</taxon>
        <taxon>Pseudomonadota</taxon>
        <taxon>Betaproteobacteria</taxon>
        <taxon>Burkholderiales</taxon>
        <taxon>Burkholderiaceae</taxon>
        <taxon>Burkholderia</taxon>
        <taxon>Burkholderia cepacia complex</taxon>
    </lineage>
</organism>
<evidence type="ECO:0000255" key="1">
    <source>
        <dbReference type="HAMAP-Rule" id="MF_01720"/>
    </source>
</evidence>
<evidence type="ECO:0000256" key="2">
    <source>
        <dbReference type="SAM" id="MobiDB-lite"/>
    </source>
</evidence>
<name>MACB_BURCH</name>
<gene>
    <name evidence="1" type="primary">macB</name>
    <name type="ordered locus">Bcen2424_4954</name>
</gene>